<reference key="1">
    <citation type="journal article" date="1987" name="J. Mol. Evol.">
        <title>A highly conserved sequence in H1 histone genes as an oligonucleotide hybridization probe: isolation and sequence of a duck H1 gene.</title>
        <authorList>
            <person name="Toenjes R."/>
            <person name="Doenecke D."/>
        </authorList>
    </citation>
    <scope>NUCLEOTIDE SEQUENCE [GENOMIC DNA]</scope>
</reference>
<sequence>MSETAPVAAPAVSAPGAKAAGKKPKKAAGGSKARKPAGPSVTELITKAVAASKERKGLSLAALKKALAAGGYDVEKNNSRIKLGLKSLVGKGTLVQTKGTGASGSFKLNKKPGETKEKATKKKPAAKPKKPAAKKPASAAKKPKKAAAVKKSPKKAKKPAAAATKKAAKSPKKAAKAGRPKKAAKSPAKAKAVKPKAAKPKAAKPKAAKAKKAAPKKK</sequence>
<name>H1_ANAPL</name>
<feature type="initiator methionine" description="Removed">
    <location>
        <position position="1"/>
    </location>
</feature>
<feature type="chain" id="PRO_0000195926" description="Histone H1">
    <location>
        <begin position="2"/>
        <end position="218"/>
    </location>
</feature>
<feature type="domain" description="H15" evidence="2">
    <location>
        <begin position="37"/>
        <end position="110"/>
    </location>
</feature>
<feature type="region of interest" description="Disordered" evidence="3">
    <location>
        <begin position="1"/>
        <end position="41"/>
    </location>
</feature>
<feature type="region of interest" description="Disordered" evidence="3">
    <location>
        <begin position="89"/>
        <end position="218"/>
    </location>
</feature>
<feature type="compositionally biased region" description="Low complexity" evidence="3">
    <location>
        <begin position="1"/>
        <end position="19"/>
    </location>
</feature>
<feature type="compositionally biased region" description="Low complexity" evidence="3">
    <location>
        <begin position="27"/>
        <end position="39"/>
    </location>
</feature>
<feature type="compositionally biased region" description="Basic residues" evidence="3">
    <location>
        <begin position="119"/>
        <end position="133"/>
    </location>
</feature>
<feature type="compositionally biased region" description="Basic residues" evidence="3">
    <location>
        <begin position="141"/>
        <end position="158"/>
    </location>
</feature>
<feature type="compositionally biased region" description="Basic residues" evidence="3">
    <location>
        <begin position="166"/>
        <end position="184"/>
    </location>
</feature>
<feature type="compositionally biased region" description="Basic residues" evidence="3">
    <location>
        <begin position="191"/>
        <end position="218"/>
    </location>
</feature>
<feature type="modified residue" description="N-acetylserine" evidence="1">
    <location>
        <position position="2"/>
    </location>
</feature>
<dbReference type="EMBL" id="X06128">
    <property type="protein sequence ID" value="CAA29495.1"/>
    <property type="molecule type" value="Genomic_DNA"/>
</dbReference>
<dbReference type="SMR" id="P09426"/>
<dbReference type="Proteomes" id="UP000694400">
    <property type="component" value="Unplaced"/>
</dbReference>
<dbReference type="GO" id="GO:0000786">
    <property type="term" value="C:nucleosome"/>
    <property type="evidence" value="ECO:0007669"/>
    <property type="project" value="InterPro"/>
</dbReference>
<dbReference type="GO" id="GO:0005634">
    <property type="term" value="C:nucleus"/>
    <property type="evidence" value="ECO:0007669"/>
    <property type="project" value="UniProtKB-SubCell"/>
</dbReference>
<dbReference type="GO" id="GO:0003677">
    <property type="term" value="F:DNA binding"/>
    <property type="evidence" value="ECO:0007669"/>
    <property type="project" value="UniProtKB-KW"/>
</dbReference>
<dbReference type="GO" id="GO:0030527">
    <property type="term" value="F:structural constituent of chromatin"/>
    <property type="evidence" value="ECO:0007669"/>
    <property type="project" value="InterPro"/>
</dbReference>
<dbReference type="GO" id="GO:0006334">
    <property type="term" value="P:nucleosome assembly"/>
    <property type="evidence" value="ECO:0007669"/>
    <property type="project" value="InterPro"/>
</dbReference>
<dbReference type="CDD" id="cd00073">
    <property type="entry name" value="H15"/>
    <property type="match status" value="1"/>
</dbReference>
<dbReference type="FunFam" id="1.10.10.10:FF:000075">
    <property type="entry name" value="Histone H1 like"/>
    <property type="match status" value="1"/>
</dbReference>
<dbReference type="Gene3D" id="1.10.10.10">
    <property type="entry name" value="Winged helix-like DNA-binding domain superfamily/Winged helix DNA-binding domain"/>
    <property type="match status" value="1"/>
</dbReference>
<dbReference type="InterPro" id="IPR005819">
    <property type="entry name" value="H1/H5"/>
</dbReference>
<dbReference type="InterPro" id="IPR005818">
    <property type="entry name" value="Histone_H1/H5_H15"/>
</dbReference>
<dbReference type="InterPro" id="IPR036388">
    <property type="entry name" value="WH-like_DNA-bd_sf"/>
</dbReference>
<dbReference type="InterPro" id="IPR036390">
    <property type="entry name" value="WH_DNA-bd_sf"/>
</dbReference>
<dbReference type="Pfam" id="PF00538">
    <property type="entry name" value="Linker_histone"/>
    <property type="match status" value="1"/>
</dbReference>
<dbReference type="PRINTS" id="PR00624">
    <property type="entry name" value="HISTONEH5"/>
</dbReference>
<dbReference type="SMART" id="SM00526">
    <property type="entry name" value="H15"/>
    <property type="match status" value="1"/>
</dbReference>
<dbReference type="SUPFAM" id="SSF46785">
    <property type="entry name" value="Winged helix' DNA-binding domain"/>
    <property type="match status" value="1"/>
</dbReference>
<dbReference type="PROSITE" id="PS51504">
    <property type="entry name" value="H15"/>
    <property type="match status" value="1"/>
</dbReference>
<evidence type="ECO:0000250" key="1">
    <source>
        <dbReference type="UniProtKB" id="P09987"/>
    </source>
</evidence>
<evidence type="ECO:0000255" key="2">
    <source>
        <dbReference type="PROSITE-ProRule" id="PRU00837"/>
    </source>
</evidence>
<evidence type="ECO:0000256" key="3">
    <source>
        <dbReference type="SAM" id="MobiDB-lite"/>
    </source>
</evidence>
<accession>P09426</accession>
<protein>
    <recommendedName>
        <fullName>Histone H1</fullName>
    </recommendedName>
</protein>
<comment type="function">
    <text>Histones H1 are necessary for the condensation of nucleosome chains into higher-order structures.</text>
</comment>
<comment type="subcellular location">
    <subcellularLocation>
        <location>Nucleus</location>
    </subcellularLocation>
    <subcellularLocation>
        <location>Chromosome</location>
    </subcellularLocation>
</comment>
<comment type="similarity">
    <text evidence="2">Belongs to the histone H1/H5 family.</text>
</comment>
<proteinExistence type="inferred from homology"/>
<keyword id="KW-0007">Acetylation</keyword>
<keyword id="KW-0158">Chromosome</keyword>
<keyword id="KW-0238">DNA-binding</keyword>
<keyword id="KW-0539">Nucleus</keyword>
<organism>
    <name type="scientific">Anas platyrhynchos</name>
    <name type="common">Mallard</name>
    <name type="synonym">Anas boschas</name>
    <dbReference type="NCBI Taxonomy" id="8839"/>
    <lineage>
        <taxon>Eukaryota</taxon>
        <taxon>Metazoa</taxon>
        <taxon>Chordata</taxon>
        <taxon>Craniata</taxon>
        <taxon>Vertebrata</taxon>
        <taxon>Euteleostomi</taxon>
        <taxon>Archelosauria</taxon>
        <taxon>Archosauria</taxon>
        <taxon>Dinosauria</taxon>
        <taxon>Saurischia</taxon>
        <taxon>Theropoda</taxon>
        <taxon>Coelurosauria</taxon>
        <taxon>Aves</taxon>
        <taxon>Neognathae</taxon>
        <taxon>Galloanserae</taxon>
        <taxon>Anseriformes</taxon>
        <taxon>Anatidae</taxon>
        <taxon>Anatinae</taxon>
        <taxon>Anas</taxon>
    </lineage>
</organism>